<gene>
    <name evidence="1" type="primary">xpt</name>
    <name type="ordered locus">BCB4264_A1626</name>
</gene>
<comment type="function">
    <text evidence="1">Converts the preformed base xanthine, a product of nucleic acid breakdown, to xanthosine 5'-monophosphate (XMP), so it can be reused for RNA or DNA synthesis.</text>
</comment>
<comment type="catalytic activity">
    <reaction evidence="1">
        <text>XMP + diphosphate = xanthine + 5-phospho-alpha-D-ribose 1-diphosphate</text>
        <dbReference type="Rhea" id="RHEA:10800"/>
        <dbReference type="ChEBI" id="CHEBI:17712"/>
        <dbReference type="ChEBI" id="CHEBI:33019"/>
        <dbReference type="ChEBI" id="CHEBI:57464"/>
        <dbReference type="ChEBI" id="CHEBI:58017"/>
        <dbReference type="EC" id="2.4.2.22"/>
    </reaction>
</comment>
<comment type="pathway">
    <text evidence="1">Purine metabolism; XMP biosynthesis via salvage pathway; XMP from xanthine: step 1/1.</text>
</comment>
<comment type="subunit">
    <text evidence="1">Homodimer.</text>
</comment>
<comment type="subcellular location">
    <subcellularLocation>
        <location evidence="1">Cytoplasm</location>
    </subcellularLocation>
</comment>
<comment type="similarity">
    <text evidence="1">Belongs to the purine/pyrimidine phosphoribosyltransferase family. Xpt subfamily.</text>
</comment>
<sequence length="197" mass="21634">MKVLQEKILNEGKVLSGDVLKVDAFLNHQIDPVLMQEIGKEFAKRFKEENITKIVTIESSGIAPSVMAALELGVKVIFARKRKSLTLQDNMYVANVYSFTKQETNEISLSRNHIDENDRVLIIDDFLANGQAALGLMSLVEQAGASIAGIGIVIEKAFQDGGKKLREQGVRVESLAEIASLDNGTVTFVQQETAEVK</sequence>
<dbReference type="EC" id="2.4.2.22" evidence="1"/>
<dbReference type="EMBL" id="CP001176">
    <property type="protein sequence ID" value="ACK59364.1"/>
    <property type="molecule type" value="Genomic_DNA"/>
</dbReference>
<dbReference type="RefSeq" id="WP_000866496.1">
    <property type="nucleotide sequence ID" value="NC_011725.1"/>
</dbReference>
<dbReference type="SMR" id="B7HHX2"/>
<dbReference type="KEGG" id="bcb:BCB4264_A1626"/>
<dbReference type="HOGENOM" id="CLU_099015_0_0_9"/>
<dbReference type="UniPathway" id="UPA00602">
    <property type="reaction ID" value="UER00658"/>
</dbReference>
<dbReference type="Proteomes" id="UP000007096">
    <property type="component" value="Chromosome"/>
</dbReference>
<dbReference type="GO" id="GO:0005737">
    <property type="term" value="C:cytoplasm"/>
    <property type="evidence" value="ECO:0007669"/>
    <property type="project" value="UniProtKB-SubCell"/>
</dbReference>
<dbReference type="GO" id="GO:0000310">
    <property type="term" value="F:xanthine phosphoribosyltransferase activity"/>
    <property type="evidence" value="ECO:0007669"/>
    <property type="project" value="UniProtKB-UniRule"/>
</dbReference>
<dbReference type="GO" id="GO:0006166">
    <property type="term" value="P:purine ribonucleoside salvage"/>
    <property type="evidence" value="ECO:0007669"/>
    <property type="project" value="UniProtKB-KW"/>
</dbReference>
<dbReference type="GO" id="GO:0046110">
    <property type="term" value="P:xanthine metabolic process"/>
    <property type="evidence" value="ECO:0007669"/>
    <property type="project" value="InterPro"/>
</dbReference>
<dbReference type="GO" id="GO:0032265">
    <property type="term" value="P:XMP salvage"/>
    <property type="evidence" value="ECO:0007669"/>
    <property type="project" value="UniProtKB-UniRule"/>
</dbReference>
<dbReference type="CDD" id="cd06223">
    <property type="entry name" value="PRTases_typeI"/>
    <property type="match status" value="1"/>
</dbReference>
<dbReference type="Gene3D" id="3.40.50.2020">
    <property type="match status" value="1"/>
</dbReference>
<dbReference type="HAMAP" id="MF_01184">
    <property type="entry name" value="XPRTase"/>
    <property type="match status" value="1"/>
</dbReference>
<dbReference type="InterPro" id="IPR000836">
    <property type="entry name" value="PRibTrfase_dom"/>
</dbReference>
<dbReference type="InterPro" id="IPR029057">
    <property type="entry name" value="PRTase-like"/>
</dbReference>
<dbReference type="InterPro" id="IPR050118">
    <property type="entry name" value="Pur/Pyrimidine_PRTase"/>
</dbReference>
<dbReference type="InterPro" id="IPR010079">
    <property type="entry name" value="Xanthine_PRibTrfase"/>
</dbReference>
<dbReference type="NCBIfam" id="NF006671">
    <property type="entry name" value="PRK09219.1"/>
    <property type="match status" value="1"/>
</dbReference>
<dbReference type="NCBIfam" id="TIGR01744">
    <property type="entry name" value="XPRTase"/>
    <property type="match status" value="1"/>
</dbReference>
<dbReference type="PANTHER" id="PTHR43864">
    <property type="entry name" value="HYPOXANTHINE/GUANINE PHOSPHORIBOSYLTRANSFERASE"/>
    <property type="match status" value="1"/>
</dbReference>
<dbReference type="PANTHER" id="PTHR43864:SF1">
    <property type="entry name" value="XANTHINE PHOSPHORIBOSYLTRANSFERASE"/>
    <property type="match status" value="1"/>
</dbReference>
<dbReference type="Pfam" id="PF00156">
    <property type="entry name" value="Pribosyltran"/>
    <property type="match status" value="1"/>
</dbReference>
<dbReference type="SUPFAM" id="SSF53271">
    <property type="entry name" value="PRTase-like"/>
    <property type="match status" value="1"/>
</dbReference>
<name>XPT_BACC4</name>
<proteinExistence type="inferred from homology"/>
<protein>
    <recommendedName>
        <fullName evidence="1">Xanthine phosphoribosyltransferase</fullName>
        <shortName evidence="1">XPRTase</shortName>
        <ecNumber evidence="1">2.4.2.22</ecNumber>
    </recommendedName>
</protein>
<evidence type="ECO:0000255" key="1">
    <source>
        <dbReference type="HAMAP-Rule" id="MF_01184"/>
    </source>
</evidence>
<keyword id="KW-0963">Cytoplasm</keyword>
<keyword id="KW-0328">Glycosyltransferase</keyword>
<keyword id="KW-0660">Purine salvage</keyword>
<keyword id="KW-0808">Transferase</keyword>
<reference key="1">
    <citation type="submission" date="2008-10" db="EMBL/GenBank/DDBJ databases">
        <title>Genome sequence of Bacillus cereus B4264.</title>
        <authorList>
            <person name="Dodson R.J."/>
            <person name="Durkin A.S."/>
            <person name="Rosovitz M.J."/>
            <person name="Rasko D.A."/>
            <person name="Hoffmaster A."/>
            <person name="Ravel J."/>
            <person name="Sutton G."/>
        </authorList>
    </citation>
    <scope>NUCLEOTIDE SEQUENCE [LARGE SCALE GENOMIC DNA]</scope>
    <source>
        <strain>B4264</strain>
    </source>
</reference>
<feature type="chain" id="PRO_1000138231" description="Xanthine phosphoribosyltransferase">
    <location>
        <begin position="1"/>
        <end position="197"/>
    </location>
</feature>
<feature type="binding site" evidence="1">
    <location>
        <position position="20"/>
    </location>
    <ligand>
        <name>xanthine</name>
        <dbReference type="ChEBI" id="CHEBI:17712"/>
    </ligand>
</feature>
<feature type="binding site" evidence="1">
    <location>
        <position position="27"/>
    </location>
    <ligand>
        <name>xanthine</name>
        <dbReference type="ChEBI" id="CHEBI:17712"/>
    </ligand>
</feature>
<feature type="binding site" evidence="1">
    <location>
        <begin position="128"/>
        <end position="132"/>
    </location>
    <ligand>
        <name>5-phospho-alpha-D-ribose 1-diphosphate</name>
        <dbReference type="ChEBI" id="CHEBI:58017"/>
    </ligand>
</feature>
<feature type="binding site" evidence="1">
    <location>
        <position position="156"/>
    </location>
    <ligand>
        <name>xanthine</name>
        <dbReference type="ChEBI" id="CHEBI:17712"/>
    </ligand>
</feature>
<organism>
    <name type="scientific">Bacillus cereus (strain B4264)</name>
    <dbReference type="NCBI Taxonomy" id="405532"/>
    <lineage>
        <taxon>Bacteria</taxon>
        <taxon>Bacillati</taxon>
        <taxon>Bacillota</taxon>
        <taxon>Bacilli</taxon>
        <taxon>Bacillales</taxon>
        <taxon>Bacillaceae</taxon>
        <taxon>Bacillus</taxon>
        <taxon>Bacillus cereus group</taxon>
    </lineage>
</organism>
<accession>B7HHX2</accession>